<organism>
    <name type="scientific">Lactobacillus delbrueckii subsp. bulgaricus (strain ATCC 11842 / DSM 20081 / BCRC 10696 / JCM 1002 / NBRC 13953 / NCIMB 11778 / NCTC 12712 / WDCM 00102 / Lb 14)</name>
    <dbReference type="NCBI Taxonomy" id="390333"/>
    <lineage>
        <taxon>Bacteria</taxon>
        <taxon>Bacillati</taxon>
        <taxon>Bacillota</taxon>
        <taxon>Bacilli</taxon>
        <taxon>Lactobacillales</taxon>
        <taxon>Lactobacillaceae</taxon>
        <taxon>Lactobacillus</taxon>
    </lineage>
</organism>
<dbReference type="EC" id="3.4.14.11" evidence="1"/>
<dbReference type="EMBL" id="CR954253">
    <property type="protein sequence ID" value="CAI98255.1"/>
    <property type="molecule type" value="Genomic_DNA"/>
</dbReference>
<dbReference type="RefSeq" id="WP_011544058.1">
    <property type="nucleotide sequence ID" value="NC_008054.1"/>
</dbReference>
<dbReference type="SMR" id="Q1G9E8"/>
<dbReference type="STRING" id="390333.Ldb1455"/>
<dbReference type="ESTHER" id="lacdl-pepx">
    <property type="family name" value="Lactobacillus_peptidase"/>
</dbReference>
<dbReference type="MEROPS" id="S15.001"/>
<dbReference type="KEGG" id="ldb:Ldb1455"/>
<dbReference type="PATRIC" id="fig|390333.13.peg.1914"/>
<dbReference type="eggNOG" id="COG2936">
    <property type="taxonomic scope" value="Bacteria"/>
</dbReference>
<dbReference type="HOGENOM" id="CLU_011800_0_0_9"/>
<dbReference type="BioCyc" id="LDEL390333:LDB_RS06270-MONOMER"/>
<dbReference type="Proteomes" id="UP000001259">
    <property type="component" value="Chromosome"/>
</dbReference>
<dbReference type="GO" id="GO:0005737">
    <property type="term" value="C:cytoplasm"/>
    <property type="evidence" value="ECO:0007669"/>
    <property type="project" value="UniProtKB-SubCell"/>
</dbReference>
<dbReference type="GO" id="GO:0004177">
    <property type="term" value="F:aminopeptidase activity"/>
    <property type="evidence" value="ECO:0007669"/>
    <property type="project" value="UniProtKB-KW"/>
</dbReference>
<dbReference type="GO" id="GO:0008239">
    <property type="term" value="F:dipeptidyl-peptidase activity"/>
    <property type="evidence" value="ECO:0007669"/>
    <property type="project" value="UniProtKB-UniRule"/>
</dbReference>
<dbReference type="GO" id="GO:0008236">
    <property type="term" value="F:serine-type peptidase activity"/>
    <property type="evidence" value="ECO:0007669"/>
    <property type="project" value="UniProtKB-KW"/>
</dbReference>
<dbReference type="GO" id="GO:0006508">
    <property type="term" value="P:proteolysis"/>
    <property type="evidence" value="ECO:0007669"/>
    <property type="project" value="UniProtKB-KW"/>
</dbReference>
<dbReference type="Gene3D" id="1.10.246.70">
    <property type="match status" value="1"/>
</dbReference>
<dbReference type="Gene3D" id="3.40.50.1820">
    <property type="entry name" value="alpha/beta hydrolase"/>
    <property type="match status" value="1"/>
</dbReference>
<dbReference type="Gene3D" id="2.60.120.260">
    <property type="entry name" value="Galactose-binding domain-like"/>
    <property type="match status" value="1"/>
</dbReference>
<dbReference type="HAMAP" id="MF_00698">
    <property type="entry name" value="Aminopeptidase_S15"/>
    <property type="match status" value="1"/>
</dbReference>
<dbReference type="InterPro" id="IPR029058">
    <property type="entry name" value="AB_hydrolase_fold"/>
</dbReference>
<dbReference type="InterPro" id="IPR008979">
    <property type="entry name" value="Galactose-bd-like_sf"/>
</dbReference>
<dbReference type="InterPro" id="IPR008252">
    <property type="entry name" value="Pept_S15_Xpro"/>
</dbReference>
<dbReference type="InterPro" id="IPR015251">
    <property type="entry name" value="PepX_N_dom"/>
</dbReference>
<dbReference type="InterPro" id="IPR036313">
    <property type="entry name" value="PepX_N_dom_sf"/>
</dbReference>
<dbReference type="InterPro" id="IPR000383">
    <property type="entry name" value="Xaa-Pro-like_dom"/>
</dbReference>
<dbReference type="InterPro" id="IPR013736">
    <property type="entry name" value="Xaa-Pro_dipept_C"/>
</dbReference>
<dbReference type="NCBIfam" id="NF003781">
    <property type="entry name" value="PRK05371.1-2"/>
    <property type="match status" value="1"/>
</dbReference>
<dbReference type="Pfam" id="PF02129">
    <property type="entry name" value="Peptidase_S15"/>
    <property type="match status" value="1"/>
</dbReference>
<dbReference type="Pfam" id="PF08530">
    <property type="entry name" value="PepX_C"/>
    <property type="match status" value="1"/>
</dbReference>
<dbReference type="Pfam" id="PF09168">
    <property type="entry name" value="PepX_N"/>
    <property type="match status" value="1"/>
</dbReference>
<dbReference type="PRINTS" id="PR00923">
    <property type="entry name" value="LACTOPTASE"/>
</dbReference>
<dbReference type="SMART" id="SM00939">
    <property type="entry name" value="PepX_C"/>
    <property type="match status" value="1"/>
</dbReference>
<dbReference type="SMART" id="SM00940">
    <property type="entry name" value="PepX_N"/>
    <property type="match status" value="1"/>
</dbReference>
<dbReference type="SUPFAM" id="SSF53474">
    <property type="entry name" value="alpha/beta-Hydrolases"/>
    <property type="match status" value="1"/>
</dbReference>
<dbReference type="SUPFAM" id="SSF49785">
    <property type="entry name" value="Galactose-binding domain-like"/>
    <property type="match status" value="1"/>
</dbReference>
<dbReference type="SUPFAM" id="SSF81761">
    <property type="entry name" value="X-Prolyl dipeptidyl aminopeptidase PepX, N-terminal domain"/>
    <property type="match status" value="1"/>
</dbReference>
<name>PEPX_LACDA</name>
<sequence>MKYNQYAYVETSPEKATEELLAINFLPENYSSLSFSELLAVLTGNVLAEATTRQAKDAKLAEFAVDDQTDLAAFLLDTPTAITASQFANVALQLLGYHPNYDYSLTDPLTCGEKHALPAFKDLTSKEELIFAFYRLLNTRSKNGQILLDVMAGKGYFTQFWGEGKFMLFNGKSLPVFDTSQVIREVVYVQSDLDTDGDGKGDLLPVTVFRPVESQDQLKVPALYTASPYFGGIIDNVKTNHNVDENLTDATTWTNPKYVAKPLVKSPAPSGQDVPATELATGQSSYGLNEYLLARGFASVFSGAIGNRHGDGIRITGSPEETISQKEVIEWLTGDRVAYTDRTRRFETKAGWCSGNVGMTGRSYLGTLQIAIATTGVKGLKTVVSEAAISSWYDYYREHGLVIAPSECQGEDMDKLAEVCQSNLWDGGNFTAKKAYEAEQAELLAAQDRATGQYSDFWESRNYRHHADGIKCSWISVHGLNDWNVKPKNVYKIWQKVKQLPVESHLFLHQGPHYNMNNLVSIDFTDLMNLWFVHELLEVENGAYEQWPKVMIQDNLEADKWHAESDWANDLGQASLYSPTADGYLSTVENGTGQLTFTDLGGTEFKKAGISETDWEYQFISGEKKWAKASLRFESEEFLHPTTLVGRPKVQVRVAANKTVGQLSVALVDLGTRQRLTATPKIFARGNQPFGYRFEADSLQEFVPDKATKAKLITKAHMNLQNYQDMKQPSKLEAGQFVDLEFELQPTYYTLPAGAKLCLIIYSTDQGMTKRPLETEDYTVDLAGTALLLYRK</sequence>
<reference key="1">
    <citation type="journal article" date="2006" name="Proc. Natl. Acad. Sci. U.S.A.">
        <title>The complete genome sequence of Lactobacillus bulgaricus reveals extensive and ongoing reductive evolution.</title>
        <authorList>
            <person name="van de Guchte M."/>
            <person name="Penaud S."/>
            <person name="Grimaldi C."/>
            <person name="Barbe V."/>
            <person name="Bryson K."/>
            <person name="Nicolas P."/>
            <person name="Robert C."/>
            <person name="Oztas S."/>
            <person name="Mangenot S."/>
            <person name="Couloux A."/>
            <person name="Loux V."/>
            <person name="Dervyn R."/>
            <person name="Bossy R."/>
            <person name="Bolotin A."/>
            <person name="Batto J.-M."/>
            <person name="Walunas T."/>
            <person name="Gibrat J.-F."/>
            <person name="Bessieres P."/>
            <person name="Weissenbach J."/>
            <person name="Ehrlich S.D."/>
            <person name="Maguin E."/>
        </authorList>
    </citation>
    <scope>NUCLEOTIDE SEQUENCE [LARGE SCALE GENOMIC DNA]</scope>
    <source>
        <strain>ATCC 11842 / DSM 20081 / BCRC 10696 / JCM 1002 / NBRC 13953 / NCIMB 11778 / NCTC 12712 / WDCM 00102 / Lb 14</strain>
    </source>
</reference>
<keyword id="KW-0031">Aminopeptidase</keyword>
<keyword id="KW-0963">Cytoplasm</keyword>
<keyword id="KW-0378">Hydrolase</keyword>
<keyword id="KW-0645">Protease</keyword>
<keyword id="KW-1185">Reference proteome</keyword>
<keyword id="KW-0720">Serine protease</keyword>
<feature type="chain" id="PRO_1000045480" description="Xaa-Pro dipeptidyl-peptidase">
    <location>
        <begin position="1"/>
        <end position="792"/>
    </location>
</feature>
<feature type="active site" description="Charge relay system" evidence="1">
    <location>
        <position position="363"/>
    </location>
</feature>
<feature type="active site" description="Charge relay system" evidence="1">
    <location>
        <position position="482"/>
    </location>
</feature>
<feature type="active site" description="Charge relay system" evidence="1">
    <location>
        <position position="513"/>
    </location>
</feature>
<accession>Q1G9E8</accession>
<protein>
    <recommendedName>
        <fullName evidence="1">Xaa-Pro dipeptidyl-peptidase</fullName>
        <ecNumber evidence="1">3.4.14.11</ecNumber>
    </recommendedName>
    <alternativeName>
        <fullName evidence="1">X-Pro dipeptidyl-peptidase</fullName>
    </alternativeName>
    <alternativeName>
        <fullName evidence="1">X-prolyl-dipeptidyl aminopeptidase</fullName>
        <shortName evidence="1">X-PDAP</shortName>
    </alternativeName>
</protein>
<comment type="function">
    <text evidence="1">Removes N-terminal dipeptides sequentially from polypeptides having unsubstituted N-termini provided that the penultimate residue is proline.</text>
</comment>
<comment type="catalytic activity">
    <reaction evidence="1">
        <text>Hydrolyzes Xaa-Pro-|- bonds to release unblocked, N-terminal dipeptides from substrates including Ala-Pro-|-p-nitroanilide and (sequentially) Tyr-Pro-|-Phe-Pro-|-Gly-Pro-|-Ile.</text>
        <dbReference type="EC" id="3.4.14.11"/>
    </reaction>
</comment>
<comment type="subunit">
    <text evidence="1">Homodimer.</text>
</comment>
<comment type="subcellular location">
    <subcellularLocation>
        <location evidence="1">Cytoplasm</location>
    </subcellularLocation>
</comment>
<comment type="similarity">
    <text evidence="1">Belongs to the peptidase S15 family.</text>
</comment>
<gene>
    <name evidence="1" type="primary">pepX</name>
    <name type="ordered locus">Ldb1455</name>
</gene>
<proteinExistence type="inferred from homology"/>
<evidence type="ECO:0000255" key="1">
    <source>
        <dbReference type="HAMAP-Rule" id="MF_00698"/>
    </source>
</evidence>